<gene>
    <name type="primary">RNF20</name>
    <name type="synonym">BRE1A</name>
</gene>
<proteinExistence type="evidence at protein level"/>
<name>BRE1A_HUMAN</name>
<evidence type="ECO:0000250" key="1">
    <source>
        <dbReference type="UniProtKB" id="Q3U319"/>
    </source>
</evidence>
<evidence type="ECO:0000250" key="2">
    <source>
        <dbReference type="UniProtKB" id="Q5DTM8"/>
    </source>
</evidence>
<evidence type="ECO:0000255" key="3"/>
<evidence type="ECO:0000255" key="4">
    <source>
        <dbReference type="PROSITE-ProRule" id="PRU00175"/>
    </source>
</evidence>
<evidence type="ECO:0000256" key="5">
    <source>
        <dbReference type="SAM" id="MobiDB-lite"/>
    </source>
</evidence>
<evidence type="ECO:0000269" key="6">
    <source>
    </source>
</evidence>
<evidence type="ECO:0000269" key="7">
    <source>
    </source>
</evidence>
<evidence type="ECO:0000269" key="8">
    <source>
    </source>
</evidence>
<evidence type="ECO:0000269" key="9">
    <source>
    </source>
</evidence>
<evidence type="ECO:0000269" key="10">
    <source>
    </source>
</evidence>
<evidence type="ECO:0000269" key="11">
    <source>
    </source>
</evidence>
<evidence type="ECO:0000305" key="12"/>
<evidence type="ECO:0000305" key="13">
    <source>
    </source>
</evidence>
<evidence type="ECO:0007744" key="14">
    <source>
    </source>
</evidence>
<evidence type="ECO:0007744" key="15">
    <source>
    </source>
</evidence>
<evidence type="ECO:0007744" key="16">
    <source>
    </source>
</evidence>
<evidence type="ECO:0007744" key="17">
    <source>
    </source>
</evidence>
<evidence type="ECO:0007744" key="18">
    <source>
    </source>
</evidence>
<evidence type="ECO:0007744" key="19">
    <source>
    </source>
</evidence>
<evidence type="ECO:0007744" key="20">
    <source>
    </source>
</evidence>
<evidence type="ECO:0007829" key="21">
    <source>
        <dbReference type="PDB" id="5TRB"/>
    </source>
</evidence>
<evidence type="ECO:0007829" key="22">
    <source>
        <dbReference type="PDB" id="8GUJ"/>
    </source>
</evidence>
<comment type="function">
    <text evidence="6 7 8 9">Component of the RNF20/40 E3 ubiquitin-protein ligase complex that mediates monoubiquitination of 'Lys-120' of histone H2B (H2BK120ub1). H2BK120ub1 gives a specific tag for epigenetic transcriptional activation and is also prerequisite for histone H3 'Lys-4' and 'Lys-79' methylation (H3K4me and H3K79me, respectively). It thereby plays a central role inb histone code and gene regulation. The RNF20/40 complex forms a H2B ubiquitin ligase complex in cooperation with the E2 enzyme UBE2A or UBE2B; reports about the cooperation with UBE2E1/UBCH are contradictory. Required for transcriptional activation of Hox genes. Recruited to the MDM2 promoter, probably by being recruited by p53/TP53, and thereby acts as a transcriptional coactivator. Mediates the polyubiquitination of isoform 2 of PA2G4 in cancer cells leading to its proteasome-mediated degradation.</text>
</comment>
<comment type="function">
    <text evidence="11">(Microbial infection) Promotes the human herpesvirus 8 (KSHV) lytic cycle by inducing the expression of lytic viral genes including the latency switch gene RTA/ORF50.</text>
</comment>
<comment type="catalytic activity">
    <reaction evidence="6 7 9">
        <text>S-ubiquitinyl-[E2 ubiquitin-conjugating enzyme]-L-cysteine + [acceptor protein]-L-lysine = [E2 ubiquitin-conjugating enzyme]-L-cysteine + N(6)-ubiquitinyl-[acceptor protein]-L-lysine.</text>
        <dbReference type="EC" id="2.3.2.27"/>
    </reaction>
</comment>
<comment type="pathway">
    <text>Protein modification; protein ubiquitination.</text>
</comment>
<comment type="subunit">
    <text evidence="2 6 7 8 9 10">Component of the RNF20/40 complex (also known as BRE1 complex) probably composed of 2 copies of RNF20/BRE1A and 2 copies of RNF40/BRE1B. Interacts with UBE2E1/UBCH6. Interacts with p53/TP53 and WAC. Interacts with PAF1; the interaction mediates the association of the PAF1 and RNF20/40 complexes which is a prerequsite for recruitment of UBE2A/B. Interacts with isoform 1 and isoform 2 of PA2G4. Interacts with FBXL19 (By similarity).</text>
</comment>
<comment type="subunit">
    <text evidence="11">(Microbial infection) Interacts with human herpesvirus 8 (KSHV) protein RTA/ORF50; this interaction targets the SMC5-SMC6 complex for proteasomal degradation.</text>
</comment>
<comment type="interaction">
    <interactant intactId="EBI-2372238">
        <id>Q5VTR2</id>
    </interactant>
    <interactant intactId="EBI-8643161">
        <id>Q9NX04</id>
        <label>AIRIM</label>
    </interactant>
    <organismsDiffer>false</organismsDiffer>
    <experiments>3</experiments>
</comment>
<comment type="interaction">
    <interactant intactId="EBI-2372238">
        <id>Q5VTR2</id>
    </interactant>
    <interactant intactId="EBI-746752">
        <id>Q9Y2J4</id>
        <label>AMOTL2</label>
    </interactant>
    <organismsDiffer>false</organismsDiffer>
    <experiments>4</experiments>
</comment>
<comment type="interaction">
    <interactant intactId="EBI-2372238">
        <id>Q5VTR2</id>
    </interactant>
    <interactant intactId="EBI-10187270">
        <id>Q9Y2J4-4</id>
        <label>AMOTL2</label>
    </interactant>
    <organismsDiffer>false</organismsDiffer>
    <experiments>3</experiments>
</comment>
<comment type="interaction">
    <interactant intactId="EBI-2372238">
        <id>Q5VTR2</id>
    </interactant>
    <interactant intactId="EBI-2837444">
        <id>Q8WUW1</id>
        <label>BRK1</label>
    </interactant>
    <organismsDiffer>false</organismsDiffer>
    <experiments>5</experiments>
</comment>
<comment type="interaction">
    <interactant intactId="EBI-2372238">
        <id>Q5VTR2</id>
    </interactant>
    <interactant intactId="EBI-930143">
        <id>Q6P1J9</id>
        <label>CDC73</label>
    </interactant>
    <organismsDiffer>false</organismsDiffer>
    <experiments>3</experiments>
</comment>
<comment type="interaction">
    <interactant intactId="EBI-2372238">
        <id>Q5VTR2</id>
    </interactant>
    <interactant intactId="EBI-1180783">
        <id>O96017</id>
        <label>CHEK2</label>
    </interactant>
    <organismsDiffer>false</organismsDiffer>
    <experiments>3</experiments>
</comment>
<comment type="interaction">
    <interactant intactId="EBI-2372238">
        <id>Q5VTR2</id>
    </interactant>
    <interactant intactId="EBI-594661">
        <id>Q92905</id>
        <label>COPS5</label>
    </interactant>
    <organismsDiffer>false</organismsDiffer>
    <experiments>2</experiments>
</comment>
<comment type="interaction">
    <interactant intactId="EBI-2372238">
        <id>Q5VTR2</id>
    </interactant>
    <interactant intactId="EBI-466029">
        <id>P42858</id>
        <label>HTT</label>
    </interactant>
    <organismsDiffer>false</organismsDiffer>
    <experiments>24</experiments>
</comment>
<comment type="interaction">
    <interactant intactId="EBI-2372238">
        <id>Q5VTR2</id>
    </interactant>
    <interactant intactId="EBI-464743">
        <id>Q09161</id>
        <label>NCBP1</label>
    </interactant>
    <organismsDiffer>false</organismsDiffer>
    <experiments>3</experiments>
</comment>
<comment type="interaction">
    <interactant intactId="EBI-2372238">
        <id>Q5VTR2</id>
    </interactant>
    <interactant intactId="EBI-2372238">
        <id>Q5VTR2</id>
        <label>RNF20</label>
    </interactant>
    <organismsDiffer>false</organismsDiffer>
    <experiments>3</experiments>
</comment>
<comment type="interaction">
    <interactant intactId="EBI-2372238">
        <id>Q5VTR2</id>
    </interactant>
    <interactant intactId="EBI-744408">
        <id>O75150</id>
        <label>RNF40</label>
    </interactant>
    <organismsDiffer>false</organismsDiffer>
    <experiments>13</experiments>
</comment>
<comment type="interaction">
    <interactant intactId="EBI-2372238">
        <id>Q5VTR2</id>
    </interactant>
    <interactant intactId="EBI-2554984">
        <id>Q9Y6A5</id>
        <label>TACC3</label>
    </interactant>
    <organismsDiffer>false</organismsDiffer>
    <experiments>3</experiments>
</comment>
<comment type="interaction">
    <interactant intactId="EBI-2372238">
        <id>Q5VTR2</id>
    </interactant>
    <interactant intactId="EBI-348546">
        <id>P51965</id>
        <label>UBE2E1</label>
    </interactant>
    <organismsDiffer>false</organismsDiffer>
    <experiments>2</experiments>
</comment>
<comment type="interaction">
    <interactant intactId="EBI-2372238">
        <id>Q5VTR2</id>
    </interactant>
    <interactant intactId="EBI-739895">
        <id>Q8N6Y0</id>
        <label>USHBP1</label>
    </interactant>
    <organismsDiffer>false</organismsDiffer>
    <experiments>3</experiments>
</comment>
<comment type="subcellular location">
    <subcellularLocation>
        <location evidence="8 13">Nucleus</location>
    </subcellularLocation>
</comment>
<comment type="tissue specificity">
    <text evidence="8">Expressed in the normal brain and also in malignant gliomas (at protein level).</text>
</comment>
<comment type="similarity">
    <text evidence="12">Belongs to the BRE1 family.</text>
</comment>
<comment type="sequence caution" evidence="12">
    <conflict type="miscellaneous discrepancy">
        <sequence resource="EMBL-CDS" id="AAH63115"/>
    </conflict>
    <text>Contaminating sequence. Potential poly-A sequence.</text>
</comment>
<comment type="sequence caution" evidence="12">
    <conflict type="erroneous initiation">
        <sequence resource="EMBL-CDS" id="BAA91326"/>
    </conflict>
    <text>Truncated N-terminus.</text>
</comment>
<comment type="sequence caution" evidence="12">
    <conflict type="erroneous initiation">
        <sequence resource="EMBL-CDS" id="BAA92057"/>
    </conflict>
    <text>Truncated N-terminus.</text>
</comment>
<comment type="sequence caution" evidence="12">
    <conflict type="erroneous initiation">
        <sequence resource="EMBL-CDS" id="BAB14005"/>
    </conflict>
    <text>Truncated N-terminus.</text>
</comment>
<organism>
    <name type="scientific">Homo sapiens</name>
    <name type="common">Human</name>
    <dbReference type="NCBI Taxonomy" id="9606"/>
    <lineage>
        <taxon>Eukaryota</taxon>
        <taxon>Metazoa</taxon>
        <taxon>Chordata</taxon>
        <taxon>Craniata</taxon>
        <taxon>Vertebrata</taxon>
        <taxon>Euteleostomi</taxon>
        <taxon>Mammalia</taxon>
        <taxon>Eutheria</taxon>
        <taxon>Euarchontoglires</taxon>
        <taxon>Primates</taxon>
        <taxon>Haplorrhini</taxon>
        <taxon>Catarrhini</taxon>
        <taxon>Hominidae</taxon>
        <taxon>Homo</taxon>
    </lineage>
</organism>
<accession>Q5VTR2</accession>
<accession>A7MCT5</accession>
<accession>Q2TB34</accession>
<accession>Q69YL5</accession>
<accession>Q6P527</accession>
<accession>Q8N3J4</accession>
<accession>Q96JD3</accession>
<accession>Q9H9Y7</accession>
<accession>Q9HA51</accession>
<accession>Q9NUR4</accession>
<accession>Q9NWQ3</accession>
<accession>Q9NX83</accession>
<keyword id="KW-0002">3D-structure</keyword>
<keyword id="KW-0007">Acetylation</keyword>
<keyword id="KW-0156">Chromatin regulator</keyword>
<keyword id="KW-0175">Coiled coil</keyword>
<keyword id="KW-0945">Host-virus interaction</keyword>
<keyword id="KW-0479">Metal-binding</keyword>
<keyword id="KW-0539">Nucleus</keyword>
<keyword id="KW-0597">Phosphoprotein</keyword>
<keyword id="KW-1267">Proteomics identification</keyword>
<keyword id="KW-1185">Reference proteome</keyword>
<keyword id="KW-0808">Transferase</keyword>
<keyword id="KW-0833">Ubl conjugation pathway</keyword>
<keyword id="KW-0862">Zinc</keyword>
<keyword id="KW-0863">Zinc-finger</keyword>
<reference key="1">
    <citation type="submission" date="2000-05" db="EMBL/GenBank/DDBJ databases">
        <title>A novel RING finger protein RNF20 gene specially expressed in testis.</title>
        <authorList>
            <person name="Wu H."/>
            <person name="Xie Y."/>
            <person name="Ying K."/>
            <person name="Mao Y.M."/>
        </authorList>
    </citation>
    <scope>NUCLEOTIDE SEQUENCE [MRNA]</scope>
    <source>
        <tissue>Brain</tissue>
    </source>
</reference>
<reference key="2">
    <citation type="journal article" date="2004" name="Nat. Genet.">
        <title>Complete sequencing and characterization of 21,243 full-length human cDNAs.</title>
        <authorList>
            <person name="Ota T."/>
            <person name="Suzuki Y."/>
            <person name="Nishikawa T."/>
            <person name="Otsuki T."/>
            <person name="Sugiyama T."/>
            <person name="Irie R."/>
            <person name="Wakamatsu A."/>
            <person name="Hayashi K."/>
            <person name="Sato H."/>
            <person name="Nagai K."/>
            <person name="Kimura K."/>
            <person name="Makita H."/>
            <person name="Sekine M."/>
            <person name="Obayashi M."/>
            <person name="Nishi T."/>
            <person name="Shibahara T."/>
            <person name="Tanaka T."/>
            <person name="Ishii S."/>
            <person name="Yamamoto J."/>
            <person name="Saito K."/>
            <person name="Kawai Y."/>
            <person name="Isono Y."/>
            <person name="Nakamura Y."/>
            <person name="Nagahari K."/>
            <person name="Murakami K."/>
            <person name="Yasuda T."/>
            <person name="Iwayanagi T."/>
            <person name="Wagatsuma M."/>
            <person name="Shiratori A."/>
            <person name="Sudo H."/>
            <person name="Hosoiri T."/>
            <person name="Kaku Y."/>
            <person name="Kodaira H."/>
            <person name="Kondo H."/>
            <person name="Sugawara M."/>
            <person name="Takahashi M."/>
            <person name="Kanda K."/>
            <person name="Yokoi T."/>
            <person name="Furuya T."/>
            <person name="Kikkawa E."/>
            <person name="Omura Y."/>
            <person name="Abe K."/>
            <person name="Kamihara K."/>
            <person name="Katsuta N."/>
            <person name="Sato K."/>
            <person name="Tanikawa M."/>
            <person name="Yamazaki M."/>
            <person name="Ninomiya K."/>
            <person name="Ishibashi T."/>
            <person name="Yamashita H."/>
            <person name="Murakawa K."/>
            <person name="Fujimori K."/>
            <person name="Tanai H."/>
            <person name="Kimata M."/>
            <person name="Watanabe M."/>
            <person name="Hiraoka S."/>
            <person name="Chiba Y."/>
            <person name="Ishida S."/>
            <person name="Ono Y."/>
            <person name="Takiguchi S."/>
            <person name="Watanabe S."/>
            <person name="Yosida M."/>
            <person name="Hotuta T."/>
            <person name="Kusano J."/>
            <person name="Kanehori K."/>
            <person name="Takahashi-Fujii A."/>
            <person name="Hara H."/>
            <person name="Tanase T.-O."/>
            <person name="Nomura Y."/>
            <person name="Togiya S."/>
            <person name="Komai F."/>
            <person name="Hara R."/>
            <person name="Takeuchi K."/>
            <person name="Arita M."/>
            <person name="Imose N."/>
            <person name="Musashino K."/>
            <person name="Yuuki H."/>
            <person name="Oshima A."/>
            <person name="Sasaki N."/>
            <person name="Aotsuka S."/>
            <person name="Yoshikawa Y."/>
            <person name="Matsunawa H."/>
            <person name="Ichihara T."/>
            <person name="Shiohata N."/>
            <person name="Sano S."/>
            <person name="Moriya S."/>
            <person name="Momiyama H."/>
            <person name="Satoh N."/>
            <person name="Takami S."/>
            <person name="Terashima Y."/>
            <person name="Suzuki O."/>
            <person name="Nakagawa S."/>
            <person name="Senoh A."/>
            <person name="Mizoguchi H."/>
            <person name="Goto Y."/>
            <person name="Shimizu F."/>
            <person name="Wakebe H."/>
            <person name="Hishigaki H."/>
            <person name="Watanabe T."/>
            <person name="Sugiyama A."/>
            <person name="Takemoto M."/>
            <person name="Kawakami B."/>
            <person name="Yamazaki M."/>
            <person name="Watanabe K."/>
            <person name="Kumagai A."/>
            <person name="Itakura S."/>
            <person name="Fukuzumi Y."/>
            <person name="Fujimori Y."/>
            <person name="Komiyama M."/>
            <person name="Tashiro H."/>
            <person name="Tanigami A."/>
            <person name="Fujiwara T."/>
            <person name="Ono T."/>
            <person name="Yamada K."/>
            <person name="Fujii Y."/>
            <person name="Ozaki K."/>
            <person name="Hirao M."/>
            <person name="Ohmori Y."/>
            <person name="Kawabata A."/>
            <person name="Hikiji T."/>
            <person name="Kobatake N."/>
            <person name="Inagaki H."/>
            <person name="Ikema Y."/>
            <person name="Okamoto S."/>
            <person name="Okitani R."/>
            <person name="Kawakami T."/>
            <person name="Noguchi S."/>
            <person name="Itoh T."/>
            <person name="Shigeta K."/>
            <person name="Senba T."/>
            <person name="Matsumura K."/>
            <person name="Nakajima Y."/>
            <person name="Mizuno T."/>
            <person name="Morinaga M."/>
            <person name="Sasaki M."/>
            <person name="Togashi T."/>
            <person name="Oyama M."/>
            <person name="Hata H."/>
            <person name="Watanabe M."/>
            <person name="Komatsu T."/>
            <person name="Mizushima-Sugano J."/>
            <person name="Satoh T."/>
            <person name="Shirai Y."/>
            <person name="Takahashi Y."/>
            <person name="Nakagawa K."/>
            <person name="Okumura K."/>
            <person name="Nagase T."/>
            <person name="Nomura N."/>
            <person name="Kikuchi H."/>
            <person name="Masuho Y."/>
            <person name="Yamashita R."/>
            <person name="Nakai K."/>
            <person name="Yada T."/>
            <person name="Nakamura Y."/>
            <person name="Ohara O."/>
            <person name="Isogai T."/>
            <person name="Sugano S."/>
        </authorList>
    </citation>
    <scope>NUCLEOTIDE SEQUENCE [LARGE SCALE MRNA]</scope>
    <source>
        <tissue>Ileal mucosa</tissue>
        <tissue>Mammary gland</tissue>
        <tissue>Placenta</tissue>
        <tissue>Teratocarcinoma</tissue>
    </source>
</reference>
<reference key="3">
    <citation type="journal article" date="2004" name="Nature">
        <title>DNA sequence and analysis of human chromosome 9.</title>
        <authorList>
            <person name="Humphray S.J."/>
            <person name="Oliver K."/>
            <person name="Hunt A.R."/>
            <person name="Plumb R.W."/>
            <person name="Loveland J.E."/>
            <person name="Howe K.L."/>
            <person name="Andrews T.D."/>
            <person name="Searle S."/>
            <person name="Hunt S.E."/>
            <person name="Scott C.E."/>
            <person name="Jones M.C."/>
            <person name="Ainscough R."/>
            <person name="Almeida J.P."/>
            <person name="Ambrose K.D."/>
            <person name="Ashwell R.I.S."/>
            <person name="Babbage A.K."/>
            <person name="Babbage S."/>
            <person name="Bagguley C.L."/>
            <person name="Bailey J."/>
            <person name="Banerjee R."/>
            <person name="Barker D.J."/>
            <person name="Barlow K.F."/>
            <person name="Bates K."/>
            <person name="Beasley H."/>
            <person name="Beasley O."/>
            <person name="Bird C.P."/>
            <person name="Bray-Allen S."/>
            <person name="Brown A.J."/>
            <person name="Brown J.Y."/>
            <person name="Burford D."/>
            <person name="Burrill W."/>
            <person name="Burton J."/>
            <person name="Carder C."/>
            <person name="Carter N.P."/>
            <person name="Chapman J.C."/>
            <person name="Chen Y."/>
            <person name="Clarke G."/>
            <person name="Clark S.Y."/>
            <person name="Clee C.M."/>
            <person name="Clegg S."/>
            <person name="Collier R.E."/>
            <person name="Corby N."/>
            <person name="Crosier M."/>
            <person name="Cummings A.T."/>
            <person name="Davies J."/>
            <person name="Dhami P."/>
            <person name="Dunn M."/>
            <person name="Dutta I."/>
            <person name="Dyer L.W."/>
            <person name="Earthrowl M.E."/>
            <person name="Faulkner L."/>
            <person name="Fleming C.J."/>
            <person name="Frankish A."/>
            <person name="Frankland J.A."/>
            <person name="French L."/>
            <person name="Fricker D.G."/>
            <person name="Garner P."/>
            <person name="Garnett J."/>
            <person name="Ghori J."/>
            <person name="Gilbert J.G.R."/>
            <person name="Glison C."/>
            <person name="Grafham D.V."/>
            <person name="Gribble S."/>
            <person name="Griffiths C."/>
            <person name="Griffiths-Jones S."/>
            <person name="Grocock R."/>
            <person name="Guy J."/>
            <person name="Hall R.E."/>
            <person name="Hammond S."/>
            <person name="Harley J.L."/>
            <person name="Harrison E.S.I."/>
            <person name="Hart E.A."/>
            <person name="Heath P.D."/>
            <person name="Henderson C.D."/>
            <person name="Hopkins B.L."/>
            <person name="Howard P.J."/>
            <person name="Howden P.J."/>
            <person name="Huckle E."/>
            <person name="Johnson C."/>
            <person name="Johnson D."/>
            <person name="Joy A.A."/>
            <person name="Kay M."/>
            <person name="Keenan S."/>
            <person name="Kershaw J.K."/>
            <person name="Kimberley A.M."/>
            <person name="King A."/>
            <person name="Knights A."/>
            <person name="Laird G.K."/>
            <person name="Langford C."/>
            <person name="Lawlor S."/>
            <person name="Leongamornlert D.A."/>
            <person name="Leversha M."/>
            <person name="Lloyd C."/>
            <person name="Lloyd D.M."/>
            <person name="Lovell J."/>
            <person name="Martin S."/>
            <person name="Mashreghi-Mohammadi M."/>
            <person name="Matthews L."/>
            <person name="McLaren S."/>
            <person name="McLay K.E."/>
            <person name="McMurray A."/>
            <person name="Milne S."/>
            <person name="Nickerson T."/>
            <person name="Nisbett J."/>
            <person name="Nordsiek G."/>
            <person name="Pearce A.V."/>
            <person name="Peck A.I."/>
            <person name="Porter K.M."/>
            <person name="Pandian R."/>
            <person name="Pelan S."/>
            <person name="Phillimore B."/>
            <person name="Povey S."/>
            <person name="Ramsey Y."/>
            <person name="Rand V."/>
            <person name="Scharfe M."/>
            <person name="Sehra H.K."/>
            <person name="Shownkeen R."/>
            <person name="Sims S.K."/>
            <person name="Skuce C.D."/>
            <person name="Smith M."/>
            <person name="Steward C.A."/>
            <person name="Swarbreck D."/>
            <person name="Sycamore N."/>
            <person name="Tester J."/>
            <person name="Thorpe A."/>
            <person name="Tracey A."/>
            <person name="Tromans A."/>
            <person name="Thomas D.W."/>
            <person name="Wall M."/>
            <person name="Wallis J.M."/>
            <person name="West A.P."/>
            <person name="Whitehead S.L."/>
            <person name="Willey D.L."/>
            <person name="Williams S.A."/>
            <person name="Wilming L."/>
            <person name="Wray P.W."/>
            <person name="Young L."/>
            <person name="Ashurst J.L."/>
            <person name="Coulson A."/>
            <person name="Blocker H."/>
            <person name="Durbin R.M."/>
            <person name="Sulston J.E."/>
            <person name="Hubbard T."/>
            <person name="Jackson M.J."/>
            <person name="Bentley D.R."/>
            <person name="Beck S."/>
            <person name="Rogers J."/>
            <person name="Dunham I."/>
        </authorList>
    </citation>
    <scope>NUCLEOTIDE SEQUENCE [LARGE SCALE GENOMIC DNA]</scope>
</reference>
<reference key="4">
    <citation type="journal article" date="2004" name="Genome Res.">
        <title>The status, quality, and expansion of the NIH full-length cDNA project: the Mammalian Gene Collection (MGC).</title>
        <authorList>
            <consortium name="The MGC Project Team"/>
        </authorList>
    </citation>
    <scope>NUCLEOTIDE SEQUENCE [LARGE SCALE MRNA]</scope>
    <source>
        <tissue>Thyroid</tissue>
    </source>
</reference>
<reference key="5">
    <citation type="journal article" date="2007" name="BMC Genomics">
        <title>The full-ORF clone resource of the German cDNA consortium.</title>
        <authorList>
            <person name="Bechtel S."/>
            <person name="Rosenfelder H."/>
            <person name="Duda A."/>
            <person name="Schmidt C.P."/>
            <person name="Ernst U."/>
            <person name="Wellenreuther R."/>
            <person name="Mehrle A."/>
            <person name="Schuster C."/>
            <person name="Bahr A."/>
            <person name="Bloecker H."/>
            <person name="Heubner D."/>
            <person name="Hoerlein A."/>
            <person name="Michel G."/>
            <person name="Wedler H."/>
            <person name="Koehrer K."/>
            <person name="Ottenwaelder B."/>
            <person name="Poustka A."/>
            <person name="Wiemann S."/>
            <person name="Schupp I."/>
        </authorList>
    </citation>
    <scope>NUCLEOTIDE SEQUENCE [LARGE SCALE MRNA] OF 453-975</scope>
    <source>
        <tissue>Amygdala</tissue>
        <tissue>Melanoma</tissue>
    </source>
</reference>
<reference key="6">
    <citation type="journal article" date="2005" name="Mol. Cell">
        <title>Monoubiquitination of human histone H2B: the factors involved and their roles in HOX gene regulation.</title>
        <authorList>
            <person name="Zhu B."/>
            <person name="Zheng Y."/>
            <person name="Pham A.-D."/>
            <person name="Mandal S.S."/>
            <person name="Erdjument-Bromage H."/>
            <person name="Tempst P."/>
            <person name="Reinberg D."/>
        </authorList>
    </citation>
    <scope>FUNCTION</scope>
    <scope>CATALYTIC ACTIVITY</scope>
    <scope>SUBUNIT</scope>
    <scope>IDENTIFICATION IN A COMPLEX WITH RNF40 AND UBE2E1</scope>
</reference>
<reference key="7">
    <citation type="journal article" date="2005" name="Mol. Cell">
        <title>The human homolog of yeast BRE1 functions as a transcriptional coactivator through direct activator interactions.</title>
        <authorList>
            <person name="Kim J."/>
            <person name="Hake S.B."/>
            <person name="Roeder R.G."/>
        </authorList>
    </citation>
    <scope>FUNCTION</scope>
    <scope>CATALYTIC ACTIVITY</scope>
    <scope>SUBCELLULAR LOCATION</scope>
    <scope>INTERACTION WITH TP53</scope>
</reference>
<reference key="8">
    <citation type="journal article" date="2006" name="Cell">
        <title>Global, in vivo, and site-specific phosphorylation dynamics in signaling networks.</title>
        <authorList>
            <person name="Olsen J.V."/>
            <person name="Blagoev B."/>
            <person name="Gnad F."/>
            <person name="Macek B."/>
            <person name="Kumar C."/>
            <person name="Mortensen P."/>
            <person name="Mann M."/>
        </authorList>
    </citation>
    <scope>IDENTIFICATION BY MASS SPECTROMETRY [LARGE SCALE ANALYSIS]</scope>
    <source>
        <tissue>Cervix carcinoma</tissue>
    </source>
</reference>
<reference key="9">
    <citation type="journal article" date="2007" name="Science">
        <title>ATM and ATR substrate analysis reveals extensive protein networks responsive to DNA damage.</title>
        <authorList>
            <person name="Matsuoka S."/>
            <person name="Ballif B.A."/>
            <person name="Smogorzewska A."/>
            <person name="McDonald E.R. III"/>
            <person name="Hurov K.E."/>
            <person name="Luo J."/>
            <person name="Bakalarski C.E."/>
            <person name="Zhao Z."/>
            <person name="Solimini N."/>
            <person name="Lerenthal Y."/>
            <person name="Shiloh Y."/>
            <person name="Gygi S.P."/>
            <person name="Elledge S.J."/>
        </authorList>
    </citation>
    <scope>IDENTIFICATION BY MASS SPECTROMETRY [LARGE SCALE ANALYSIS]</scope>
    <source>
        <tissue>Embryonic kidney</tissue>
    </source>
</reference>
<reference key="10">
    <citation type="journal article" date="2008" name="Proc. Natl. Acad. Sci. U.S.A.">
        <title>A quantitative atlas of mitotic phosphorylation.</title>
        <authorList>
            <person name="Dephoure N."/>
            <person name="Zhou C."/>
            <person name="Villen J."/>
            <person name="Beausoleil S.A."/>
            <person name="Bakalarski C.E."/>
            <person name="Elledge S.J."/>
            <person name="Gygi S.P."/>
        </authorList>
    </citation>
    <scope>PHOSPHORYLATION [LARGE SCALE ANALYSIS] AT SER-522</scope>
    <scope>IDENTIFICATION BY MASS SPECTROMETRY [LARGE SCALE ANALYSIS]</scope>
    <source>
        <tissue>Cervix carcinoma</tissue>
    </source>
</reference>
<reference key="11">
    <citation type="journal article" date="2009" name="Anal. Chem.">
        <title>Lys-N and trypsin cover complementary parts of the phosphoproteome in a refined SCX-based approach.</title>
        <authorList>
            <person name="Gauci S."/>
            <person name="Helbig A.O."/>
            <person name="Slijper M."/>
            <person name="Krijgsveld J."/>
            <person name="Heck A.J."/>
            <person name="Mohammed S."/>
        </authorList>
    </citation>
    <scope>IDENTIFICATION BY MASS SPECTROMETRY [LARGE SCALE ANALYSIS]</scope>
</reference>
<reference key="12">
    <citation type="journal article" date="2009" name="Cell">
        <title>RAD6-mediated transcription-coupled H2B ubiquitylation directly stimulates H3K4 methylation in human cells.</title>
        <authorList>
            <person name="Kim J."/>
            <person name="Guermah M."/>
            <person name="McGinty R.K."/>
            <person name="Lee J.S."/>
            <person name="Tang Z."/>
            <person name="Milne T.A."/>
            <person name="Shilatifard A."/>
            <person name="Muir T.W."/>
            <person name="Roeder R.G."/>
        </authorList>
    </citation>
    <scope>FUNCTION</scope>
    <scope>CATALYTIC ACTIVITY</scope>
    <scope>SUBUNIT</scope>
</reference>
<reference key="13">
    <citation type="journal article" date="2009" name="Mol. Biol. Cell">
        <title>Human BRE1 is an E3 ubiquitin ligase for Ebp1 tumor suppressor.</title>
        <authorList>
            <person name="Liu Z."/>
            <person name="Oh S.M."/>
            <person name="Okada M."/>
            <person name="Liu X."/>
            <person name="Cheng D."/>
            <person name="Peng J."/>
            <person name="Brat D.J."/>
            <person name="Sun S.Y."/>
            <person name="Zhou W."/>
            <person name="Gu W."/>
            <person name="Ye K."/>
        </authorList>
    </citation>
    <scope>FUNCTION</scope>
    <scope>SUBCELLULAR LOCATION</scope>
    <scope>INTERACTION WITH PA2G4</scope>
    <scope>TISSUE SPECIFICITY</scope>
</reference>
<reference key="14">
    <citation type="journal article" date="2009" name="Sci. Signal.">
        <title>Quantitative phosphoproteomic analysis of T cell receptor signaling reveals system-wide modulation of protein-protein interactions.</title>
        <authorList>
            <person name="Mayya V."/>
            <person name="Lundgren D.H."/>
            <person name="Hwang S.-I."/>
            <person name="Rezaul K."/>
            <person name="Wu L."/>
            <person name="Eng J.K."/>
            <person name="Rodionov V."/>
            <person name="Han D.K."/>
        </authorList>
    </citation>
    <scope>PHOSPHORYLATION [LARGE SCALE ANALYSIS] AT SER-136 AND SER-138</scope>
    <scope>IDENTIFICATION BY MASS SPECTROMETRY [LARGE SCALE ANALYSIS]</scope>
    <source>
        <tissue>Leukemic T-cell</tissue>
    </source>
</reference>
<reference key="15">
    <citation type="journal article" date="2009" name="Science">
        <title>Lysine acetylation targets protein complexes and co-regulates major cellular functions.</title>
        <authorList>
            <person name="Choudhary C."/>
            <person name="Kumar C."/>
            <person name="Gnad F."/>
            <person name="Nielsen M.L."/>
            <person name="Rehman M."/>
            <person name="Walther T.C."/>
            <person name="Olsen J.V."/>
            <person name="Mann M."/>
        </authorList>
    </citation>
    <scope>ACETYLATION [LARGE SCALE ANALYSIS] AT LYS-348</scope>
    <scope>IDENTIFICATION BY MASS SPECTROMETRY [LARGE SCALE ANALYSIS]</scope>
</reference>
<reference key="16">
    <citation type="journal article" date="2010" name="Sci. Signal.">
        <title>Quantitative phosphoproteomics reveals widespread full phosphorylation site occupancy during mitosis.</title>
        <authorList>
            <person name="Olsen J.V."/>
            <person name="Vermeulen M."/>
            <person name="Santamaria A."/>
            <person name="Kumar C."/>
            <person name="Miller M.L."/>
            <person name="Jensen L.J."/>
            <person name="Gnad F."/>
            <person name="Cox J."/>
            <person name="Jensen T.S."/>
            <person name="Nigg E.A."/>
            <person name="Brunak S."/>
            <person name="Mann M."/>
        </authorList>
    </citation>
    <scope>PHOSPHORYLATION [LARGE SCALE ANALYSIS] AT SER-138</scope>
    <scope>IDENTIFICATION BY MASS SPECTROMETRY [LARGE SCALE ANALYSIS]</scope>
    <source>
        <tissue>Cervix carcinoma</tissue>
    </source>
</reference>
<reference key="17">
    <citation type="journal article" date="2011" name="BMC Syst. Biol.">
        <title>Initial characterization of the human central proteome.</title>
        <authorList>
            <person name="Burkard T.R."/>
            <person name="Planyavsky M."/>
            <person name="Kaupe I."/>
            <person name="Breitwieser F.P."/>
            <person name="Buerckstuemmer T."/>
            <person name="Bennett K.L."/>
            <person name="Superti-Furga G."/>
            <person name="Colinge J."/>
        </authorList>
    </citation>
    <scope>IDENTIFICATION BY MASS SPECTROMETRY [LARGE SCALE ANALYSIS]</scope>
</reference>
<reference key="18">
    <citation type="journal article" date="2011" name="Mol. Cell">
        <title>WAC, a functional partner of RNF20/40, regulates histone H2B ubiquitination and gene transcription.</title>
        <authorList>
            <person name="Zhang F."/>
            <person name="Yu X."/>
        </authorList>
    </citation>
    <scope>INTERACTION WITH WAC</scope>
</reference>
<reference key="19">
    <citation type="journal article" date="2011" name="Sci. Signal.">
        <title>System-wide temporal characterization of the proteome and phosphoproteome of human embryonic stem cell differentiation.</title>
        <authorList>
            <person name="Rigbolt K.T."/>
            <person name="Prokhorova T.A."/>
            <person name="Akimov V."/>
            <person name="Henningsen J."/>
            <person name="Johansen P.T."/>
            <person name="Kratchmarova I."/>
            <person name="Kassem M."/>
            <person name="Mann M."/>
            <person name="Olsen J.V."/>
            <person name="Blagoev B."/>
        </authorList>
    </citation>
    <scope>PHOSPHORYLATION [LARGE SCALE ANALYSIS] AT SER-138</scope>
    <scope>IDENTIFICATION BY MASS SPECTROMETRY [LARGE SCALE ANALYSIS]</scope>
</reference>
<reference key="20">
    <citation type="journal article" date="2013" name="J. Proteome Res.">
        <title>Toward a comprehensive characterization of a human cancer cell phosphoproteome.</title>
        <authorList>
            <person name="Zhou H."/>
            <person name="Di Palma S."/>
            <person name="Preisinger C."/>
            <person name="Peng M."/>
            <person name="Polat A.N."/>
            <person name="Heck A.J."/>
            <person name="Mohammed S."/>
        </authorList>
    </citation>
    <scope>PHOSPHORYLATION [LARGE SCALE ANALYSIS] AT SER-41; SER-136 AND SER-138</scope>
    <scope>IDENTIFICATION BY MASS SPECTROMETRY [LARGE SCALE ANALYSIS]</scope>
    <source>
        <tissue>Cervix carcinoma</tissue>
        <tissue>Erythroleukemia</tissue>
    </source>
</reference>
<reference key="21">
    <citation type="journal article" date="2014" name="J. Proteomics">
        <title>An enzyme assisted RP-RPLC approach for in-depth analysis of human liver phosphoproteome.</title>
        <authorList>
            <person name="Bian Y."/>
            <person name="Song C."/>
            <person name="Cheng K."/>
            <person name="Dong M."/>
            <person name="Wang F."/>
            <person name="Huang J."/>
            <person name="Sun D."/>
            <person name="Wang L."/>
            <person name="Ye M."/>
            <person name="Zou H."/>
        </authorList>
    </citation>
    <scope>PHOSPHORYLATION [LARGE SCALE ANALYSIS] AT SER-136 AND SER-138</scope>
    <scope>IDENTIFICATION BY MASS SPECTROMETRY [LARGE SCALE ANALYSIS]</scope>
    <source>
        <tissue>Liver</tissue>
    </source>
</reference>
<reference key="22">
    <citation type="journal article" date="2023" name="J. Virol.">
        <title>KSHV RTA utilizes the host E3 ubiquitin ligase complex RNF20/40 to drive lytic reactivation.</title>
        <authorList>
            <person name="Spires L.M."/>
            <person name="Wind E."/>
            <person name="Papp B."/>
            <person name="Toth Z."/>
        </authorList>
    </citation>
    <scope>FUNCTION (MICROBIAL INFECTION)</scope>
    <scope>INTERACTION WITH HUMAN HERPESVIRUS 8 PROTEIN RTA/ORF50 (MICROBIAL INFECTION)</scope>
</reference>
<dbReference type="EC" id="2.3.2.27" evidence="6 7 9"/>
<dbReference type="EMBL" id="AF265230">
    <property type="protein sequence ID" value="AAK58539.1"/>
    <property type="molecule type" value="mRNA"/>
</dbReference>
<dbReference type="EMBL" id="AK000389">
    <property type="protein sequence ID" value="BAA91134.1"/>
    <property type="status" value="ALT_SEQ"/>
    <property type="molecule type" value="mRNA"/>
</dbReference>
<dbReference type="EMBL" id="AK000697">
    <property type="protein sequence ID" value="BAA91326.1"/>
    <property type="status" value="ALT_INIT"/>
    <property type="molecule type" value="mRNA"/>
</dbReference>
<dbReference type="EMBL" id="AK002051">
    <property type="protein sequence ID" value="BAA92057.1"/>
    <property type="status" value="ALT_INIT"/>
    <property type="molecule type" value="mRNA"/>
</dbReference>
<dbReference type="EMBL" id="AK022300">
    <property type="protein sequence ID" value="BAB14005.1"/>
    <property type="status" value="ALT_INIT"/>
    <property type="molecule type" value="mRNA"/>
</dbReference>
<dbReference type="EMBL" id="AK022532">
    <property type="protein sequence ID" value="BAB14081.1"/>
    <property type="molecule type" value="mRNA"/>
</dbReference>
<dbReference type="EMBL" id="AK314401">
    <property type="protein sequence ID" value="BAG37025.1"/>
    <property type="molecule type" value="mRNA"/>
</dbReference>
<dbReference type="EMBL" id="AL353621">
    <property type="status" value="NOT_ANNOTATED_CDS"/>
    <property type="molecule type" value="Genomic_DNA"/>
</dbReference>
<dbReference type="EMBL" id="AL591377">
    <property type="status" value="NOT_ANNOTATED_CDS"/>
    <property type="molecule type" value="Genomic_DNA"/>
</dbReference>
<dbReference type="EMBL" id="BC063115">
    <property type="protein sequence ID" value="AAH63115.1"/>
    <property type="status" value="ALT_SEQ"/>
    <property type="molecule type" value="mRNA"/>
</dbReference>
<dbReference type="EMBL" id="BC110584">
    <property type="protein sequence ID" value="AAI10585.1"/>
    <property type="molecule type" value="mRNA"/>
</dbReference>
<dbReference type="EMBL" id="BC110585">
    <property type="protein sequence ID" value="AAI10586.1"/>
    <property type="molecule type" value="mRNA"/>
</dbReference>
<dbReference type="EMBL" id="BC152309">
    <property type="protein sequence ID" value="AAI52310.1"/>
    <property type="molecule type" value="mRNA"/>
</dbReference>
<dbReference type="EMBL" id="AL832910">
    <property type="protein sequence ID" value="CAH10630.1"/>
    <property type="molecule type" value="mRNA"/>
</dbReference>
<dbReference type="EMBL" id="AL834272">
    <property type="protein sequence ID" value="CAD38947.1"/>
    <property type="molecule type" value="mRNA"/>
</dbReference>
<dbReference type="CCDS" id="CCDS35084.1"/>
<dbReference type="RefSeq" id="NP_062538.5">
    <property type="nucleotide sequence ID" value="NM_019592.6"/>
</dbReference>
<dbReference type="RefSeq" id="XP_011517164.1">
    <property type="nucleotide sequence ID" value="XM_011518862.2"/>
</dbReference>
<dbReference type="RefSeq" id="XP_047279550.1">
    <property type="nucleotide sequence ID" value="XM_047423594.1"/>
</dbReference>
<dbReference type="RefSeq" id="XP_054219263.1">
    <property type="nucleotide sequence ID" value="XM_054363288.1"/>
</dbReference>
<dbReference type="RefSeq" id="XP_054219264.1">
    <property type="nucleotide sequence ID" value="XM_054363289.1"/>
</dbReference>
<dbReference type="PDB" id="5TRB">
    <property type="method" value="X-ray"/>
    <property type="resolution" value="1.80 A"/>
    <property type="chains" value="A=906-975"/>
</dbReference>
<dbReference type="PDB" id="8GUI">
    <property type="method" value="EM"/>
    <property type="resolution" value="2.81 A"/>
    <property type="chains" value="K=1-975"/>
</dbReference>
<dbReference type="PDB" id="8GUJ">
    <property type="method" value="EM"/>
    <property type="resolution" value="2.80 A"/>
    <property type="chains" value="K=1-975"/>
</dbReference>
<dbReference type="PDB" id="8IEJ">
    <property type="method" value="EM"/>
    <property type="resolution" value="3.12 A"/>
    <property type="chains" value="M=915-974"/>
</dbReference>
<dbReference type="PDBsum" id="5TRB"/>
<dbReference type="PDBsum" id="8GUI"/>
<dbReference type="PDBsum" id="8GUJ"/>
<dbReference type="PDBsum" id="8IEJ"/>
<dbReference type="EMDB" id="EMD-34274"/>
<dbReference type="EMDB" id="EMD-35383"/>
<dbReference type="SMR" id="Q5VTR2"/>
<dbReference type="BioGRID" id="121119">
    <property type="interactions" value="229"/>
</dbReference>
<dbReference type="ComplexPortal" id="CPX-8344">
    <property type="entry name" value="BRE1 E3 ubiquitin ligase complex"/>
</dbReference>
<dbReference type="CORUM" id="Q5VTR2"/>
<dbReference type="DIP" id="DIP-53411N"/>
<dbReference type="FunCoup" id="Q5VTR2">
    <property type="interactions" value="3543"/>
</dbReference>
<dbReference type="IntAct" id="Q5VTR2">
    <property type="interactions" value="99"/>
</dbReference>
<dbReference type="MINT" id="Q5VTR2"/>
<dbReference type="STRING" id="9606.ENSP00000373772"/>
<dbReference type="GlyGen" id="Q5VTR2">
    <property type="glycosylation" value="2 sites, 1 O-linked glycan (2 sites)"/>
</dbReference>
<dbReference type="iPTMnet" id="Q5VTR2"/>
<dbReference type="MetOSite" id="Q5VTR2"/>
<dbReference type="PhosphoSitePlus" id="Q5VTR2"/>
<dbReference type="BioMuta" id="RNF20"/>
<dbReference type="DMDM" id="84027766"/>
<dbReference type="jPOST" id="Q5VTR2"/>
<dbReference type="MassIVE" id="Q5VTR2"/>
<dbReference type="PaxDb" id="9606-ENSP00000373772"/>
<dbReference type="PeptideAtlas" id="Q5VTR2"/>
<dbReference type="ProteomicsDB" id="65346"/>
<dbReference type="Pumba" id="Q5VTR2"/>
<dbReference type="Antibodypedia" id="29174">
    <property type="antibodies" value="354 antibodies from 33 providers"/>
</dbReference>
<dbReference type="DNASU" id="56254"/>
<dbReference type="Ensembl" id="ENST00000389120.8">
    <property type="protein sequence ID" value="ENSP00000373772.3"/>
    <property type="gene ID" value="ENSG00000155827.12"/>
</dbReference>
<dbReference type="GeneID" id="56254"/>
<dbReference type="KEGG" id="hsa:56254"/>
<dbReference type="MANE-Select" id="ENST00000389120.8">
    <property type="protein sequence ID" value="ENSP00000373772.3"/>
    <property type="RefSeq nucleotide sequence ID" value="NM_019592.7"/>
    <property type="RefSeq protein sequence ID" value="NP_062538.5"/>
</dbReference>
<dbReference type="UCSC" id="uc004bbn.5">
    <property type="organism name" value="human"/>
</dbReference>
<dbReference type="AGR" id="HGNC:10062"/>
<dbReference type="CTD" id="56254"/>
<dbReference type="DisGeNET" id="56254"/>
<dbReference type="GeneCards" id="RNF20"/>
<dbReference type="HGNC" id="HGNC:10062">
    <property type="gene designation" value="RNF20"/>
</dbReference>
<dbReference type="HPA" id="ENSG00000155827">
    <property type="expression patterns" value="Low tissue specificity"/>
</dbReference>
<dbReference type="MIM" id="607699">
    <property type="type" value="gene"/>
</dbReference>
<dbReference type="neXtProt" id="NX_Q5VTR2"/>
<dbReference type="OpenTargets" id="ENSG00000155827"/>
<dbReference type="PharmGKB" id="PA34427"/>
<dbReference type="VEuPathDB" id="HostDB:ENSG00000155827"/>
<dbReference type="eggNOG" id="KOG0978">
    <property type="taxonomic scope" value="Eukaryota"/>
</dbReference>
<dbReference type="GeneTree" id="ENSGT00390000002866"/>
<dbReference type="HOGENOM" id="CLU_002640_0_0_1"/>
<dbReference type="InParanoid" id="Q5VTR2"/>
<dbReference type="OMA" id="YSNIDTR"/>
<dbReference type="OrthoDB" id="10266039at2759"/>
<dbReference type="PAN-GO" id="Q5VTR2">
    <property type="GO annotations" value="5 GO annotations based on evolutionary models"/>
</dbReference>
<dbReference type="PhylomeDB" id="Q5VTR2"/>
<dbReference type="TreeFam" id="TF323183"/>
<dbReference type="BRENDA" id="2.3.2.27">
    <property type="organism ID" value="2681"/>
</dbReference>
<dbReference type="PathwayCommons" id="Q5VTR2"/>
<dbReference type="Reactome" id="R-HSA-8866654">
    <property type="pathway name" value="E3 ubiquitin ligases ubiquitinate target proteins"/>
</dbReference>
<dbReference type="Reactome" id="R-HSA-9013422">
    <property type="pathway name" value="RHOBTB1 GTPase cycle"/>
</dbReference>
<dbReference type="SignaLink" id="Q5VTR2"/>
<dbReference type="SIGNOR" id="Q5VTR2"/>
<dbReference type="UniPathway" id="UPA00143"/>
<dbReference type="BioGRID-ORCS" id="56254">
    <property type="hits" value="630 hits in 1217 CRISPR screens"/>
</dbReference>
<dbReference type="CD-CODE" id="91857CE7">
    <property type="entry name" value="Nucleolus"/>
</dbReference>
<dbReference type="ChiTaRS" id="RNF20">
    <property type="organism name" value="human"/>
</dbReference>
<dbReference type="GeneWiki" id="RNF20"/>
<dbReference type="GenomeRNAi" id="56254"/>
<dbReference type="Pharos" id="Q5VTR2">
    <property type="development level" value="Tbio"/>
</dbReference>
<dbReference type="PRO" id="PR:Q5VTR2"/>
<dbReference type="Proteomes" id="UP000005640">
    <property type="component" value="Chromosome 9"/>
</dbReference>
<dbReference type="RNAct" id="Q5VTR2">
    <property type="molecule type" value="protein"/>
</dbReference>
<dbReference type="Bgee" id="ENSG00000155827">
    <property type="expression patterns" value="Expressed in tibialis anterior and 195 other cell types or tissues"/>
</dbReference>
<dbReference type="ExpressionAtlas" id="Q5VTR2">
    <property type="expression patterns" value="baseline and differential"/>
</dbReference>
<dbReference type="GO" id="GO:0033503">
    <property type="term" value="C:HULC complex"/>
    <property type="evidence" value="ECO:0000314"/>
    <property type="project" value="UniProtKB"/>
</dbReference>
<dbReference type="GO" id="GO:0005730">
    <property type="term" value="C:nucleolus"/>
    <property type="evidence" value="ECO:0000314"/>
    <property type="project" value="UniProtKB"/>
</dbReference>
<dbReference type="GO" id="GO:0005654">
    <property type="term" value="C:nucleoplasm"/>
    <property type="evidence" value="ECO:0000314"/>
    <property type="project" value="HPA"/>
</dbReference>
<dbReference type="GO" id="GO:0005634">
    <property type="term" value="C:nucleus"/>
    <property type="evidence" value="ECO:0000314"/>
    <property type="project" value="UniProtKB"/>
</dbReference>
<dbReference type="GO" id="GO:0000151">
    <property type="term" value="C:ubiquitin ligase complex"/>
    <property type="evidence" value="ECO:0000314"/>
    <property type="project" value="UniProtKB"/>
</dbReference>
<dbReference type="GO" id="GO:0003682">
    <property type="term" value="F:chromatin binding"/>
    <property type="evidence" value="ECO:0007669"/>
    <property type="project" value="Ensembl"/>
</dbReference>
<dbReference type="GO" id="GO:0042393">
    <property type="term" value="F:histone binding"/>
    <property type="evidence" value="ECO:0000314"/>
    <property type="project" value="UniProtKB"/>
</dbReference>
<dbReference type="GO" id="GO:0140850">
    <property type="term" value="F:histone H2B C-terminal K residue ubiquitin ligase activity"/>
    <property type="evidence" value="ECO:0000315"/>
    <property type="project" value="UniProtKB"/>
</dbReference>
<dbReference type="GO" id="GO:0042802">
    <property type="term" value="F:identical protein binding"/>
    <property type="evidence" value="ECO:0000353"/>
    <property type="project" value="IntAct"/>
</dbReference>
<dbReference type="GO" id="GO:0003730">
    <property type="term" value="F:mRNA 3'-UTR binding"/>
    <property type="evidence" value="ECO:0000314"/>
    <property type="project" value="UniProtKB"/>
</dbReference>
<dbReference type="GO" id="GO:0002039">
    <property type="term" value="F:p53 binding"/>
    <property type="evidence" value="ECO:0000314"/>
    <property type="project" value="UniProtKB"/>
</dbReference>
<dbReference type="GO" id="GO:0003713">
    <property type="term" value="F:transcription coactivator activity"/>
    <property type="evidence" value="ECO:0000314"/>
    <property type="project" value="UniProtKB"/>
</dbReference>
<dbReference type="GO" id="GO:0061630">
    <property type="term" value="F:ubiquitin protein ligase activity"/>
    <property type="evidence" value="ECO:0000318"/>
    <property type="project" value="GO_Central"/>
</dbReference>
<dbReference type="GO" id="GO:0031625">
    <property type="term" value="F:ubiquitin protein ligase binding"/>
    <property type="evidence" value="ECO:0000353"/>
    <property type="project" value="UniProtKB"/>
</dbReference>
<dbReference type="GO" id="GO:0004842">
    <property type="term" value="F:ubiquitin-protein transferase activity"/>
    <property type="evidence" value="ECO:0000314"/>
    <property type="project" value="UniProtKB"/>
</dbReference>
<dbReference type="GO" id="GO:0008270">
    <property type="term" value="F:zinc ion binding"/>
    <property type="evidence" value="ECO:0007669"/>
    <property type="project" value="UniProtKB-KW"/>
</dbReference>
<dbReference type="GO" id="GO:0030336">
    <property type="term" value="P:negative regulation of cell migration"/>
    <property type="evidence" value="ECO:0000314"/>
    <property type="project" value="UniProtKB"/>
</dbReference>
<dbReference type="GO" id="GO:0045893">
    <property type="term" value="P:positive regulation of DNA-templated transcription"/>
    <property type="evidence" value="ECO:0000315"/>
    <property type="project" value="UniProtKB"/>
</dbReference>
<dbReference type="GO" id="GO:0045944">
    <property type="term" value="P:positive regulation of transcription by RNA polymerase II"/>
    <property type="evidence" value="ECO:0000314"/>
    <property type="project" value="UniProtKB"/>
</dbReference>
<dbReference type="GO" id="GO:0000209">
    <property type="term" value="P:protein polyubiquitination"/>
    <property type="evidence" value="ECO:0000314"/>
    <property type="project" value="UniProtKB"/>
</dbReference>
<dbReference type="GO" id="GO:0006355">
    <property type="term" value="P:regulation of DNA-templated transcription"/>
    <property type="evidence" value="ECO:0000315"/>
    <property type="project" value="UniProtKB"/>
</dbReference>
<dbReference type="GO" id="GO:0006511">
    <property type="term" value="P:ubiquitin-dependent protein catabolic process"/>
    <property type="evidence" value="ECO:0000315"/>
    <property type="project" value="UniProtKB"/>
</dbReference>
<dbReference type="CDD" id="cd16814">
    <property type="entry name" value="RING-HC_RNF20"/>
    <property type="match status" value="1"/>
</dbReference>
<dbReference type="FunFam" id="1.20.1170.10:FF:000003">
    <property type="entry name" value="E3 ubiquitin protein ligase"/>
    <property type="match status" value="1"/>
</dbReference>
<dbReference type="FunFam" id="3.30.40.10:FF:000040">
    <property type="entry name" value="E3 ubiquitin protein ligase"/>
    <property type="match status" value="1"/>
</dbReference>
<dbReference type="Gene3D" id="1.20.1170.10">
    <property type="match status" value="1"/>
</dbReference>
<dbReference type="Gene3D" id="3.30.40.10">
    <property type="entry name" value="Zinc/RING finger domain, C3HC4 (zinc finger)"/>
    <property type="match status" value="1"/>
</dbReference>
<dbReference type="InterPro" id="IPR013956">
    <property type="entry name" value="E3_ubiquit_lig_Bre1"/>
</dbReference>
<dbReference type="InterPro" id="IPR018957">
    <property type="entry name" value="Znf_C3HC4_RING-type"/>
</dbReference>
<dbReference type="InterPro" id="IPR001841">
    <property type="entry name" value="Znf_RING"/>
</dbReference>
<dbReference type="InterPro" id="IPR013083">
    <property type="entry name" value="Znf_RING/FYVE/PHD"/>
</dbReference>
<dbReference type="InterPro" id="IPR017907">
    <property type="entry name" value="Znf_RING_CS"/>
</dbReference>
<dbReference type="PANTHER" id="PTHR23163:SF2">
    <property type="entry name" value="E3 UBIQUITIN-PROTEIN LIGASE BRE1A"/>
    <property type="match status" value="1"/>
</dbReference>
<dbReference type="PANTHER" id="PTHR23163">
    <property type="entry name" value="RING FINGER PROTEIN-RELATED"/>
    <property type="match status" value="1"/>
</dbReference>
<dbReference type="Pfam" id="PF00097">
    <property type="entry name" value="zf-C3HC4"/>
    <property type="match status" value="1"/>
</dbReference>
<dbReference type="SMART" id="SM00184">
    <property type="entry name" value="RING"/>
    <property type="match status" value="1"/>
</dbReference>
<dbReference type="SUPFAM" id="SSF57850">
    <property type="entry name" value="RING/U-box"/>
    <property type="match status" value="1"/>
</dbReference>
<dbReference type="PROSITE" id="PS00518">
    <property type="entry name" value="ZF_RING_1"/>
    <property type="match status" value="1"/>
</dbReference>
<dbReference type="PROSITE" id="PS50089">
    <property type="entry name" value="ZF_RING_2"/>
    <property type="match status" value="1"/>
</dbReference>
<protein>
    <recommendedName>
        <fullName>E3 ubiquitin-protein ligase BRE1A</fullName>
        <shortName>BRE1-A</shortName>
        <shortName>hBRE1</shortName>
        <ecNumber evidence="6 7 9">2.3.2.27</ecNumber>
    </recommendedName>
    <alternativeName>
        <fullName>RING finger protein 20</fullName>
    </alternativeName>
    <alternativeName>
        <fullName evidence="12">RING-type E3 ubiquitin transferase BRE1A</fullName>
    </alternativeName>
</protein>
<feature type="chain" id="PRO_0000055836" description="E3 ubiquitin-protein ligase BRE1A">
    <location>
        <begin position="1"/>
        <end position="975"/>
    </location>
</feature>
<feature type="zinc finger region" description="RING-type" evidence="4">
    <location>
        <begin position="922"/>
        <end position="961"/>
    </location>
</feature>
<feature type="region of interest" description="Disordered" evidence="5">
    <location>
        <begin position="1"/>
        <end position="30"/>
    </location>
</feature>
<feature type="region of interest" description="Disordered" evidence="5">
    <location>
        <begin position="125"/>
        <end position="155"/>
    </location>
</feature>
<feature type="region of interest" description="Disordered" evidence="5">
    <location>
        <begin position="507"/>
        <end position="622"/>
    </location>
</feature>
<feature type="coiled-coil region" evidence="3">
    <location>
        <begin position="43"/>
        <end position="90"/>
    </location>
</feature>
<feature type="coiled-coil region" evidence="3">
    <location>
        <begin position="168"/>
        <end position="375"/>
    </location>
</feature>
<feature type="coiled-coil region" evidence="3">
    <location>
        <begin position="429"/>
        <end position="898"/>
    </location>
</feature>
<feature type="compositionally biased region" description="Basic and acidic residues" evidence="5">
    <location>
        <begin position="139"/>
        <end position="151"/>
    </location>
</feature>
<feature type="compositionally biased region" description="Basic and acidic residues" evidence="5">
    <location>
        <begin position="527"/>
        <end position="540"/>
    </location>
</feature>
<feature type="compositionally biased region" description="Low complexity" evidence="5">
    <location>
        <begin position="543"/>
        <end position="552"/>
    </location>
</feature>
<feature type="compositionally biased region" description="Basic and acidic residues" evidence="5">
    <location>
        <begin position="558"/>
        <end position="622"/>
    </location>
</feature>
<feature type="modified residue" description="N6-acetyllysine" evidence="1">
    <location>
        <position position="21"/>
    </location>
</feature>
<feature type="modified residue" description="Phosphoserine" evidence="19">
    <location>
        <position position="41"/>
    </location>
</feature>
<feature type="modified residue" description="Phosphoserine" evidence="16 19 20">
    <location>
        <position position="136"/>
    </location>
</feature>
<feature type="modified residue" description="Phosphoserine" evidence="16 17 18 19 20">
    <location>
        <position position="138"/>
    </location>
</feature>
<feature type="modified residue" description="N6-acetyllysine" evidence="15">
    <location>
        <position position="348"/>
    </location>
</feature>
<feature type="modified residue" description="N6-acetyllysine" evidence="1">
    <location>
        <position position="510"/>
    </location>
</feature>
<feature type="modified residue" description="Phosphoserine" evidence="14">
    <location>
        <position position="522"/>
    </location>
</feature>
<feature type="modified residue" description="Phosphoserine" evidence="1">
    <location>
        <position position="562"/>
    </location>
</feature>
<feature type="sequence conflict" description="In Ref. 2; BAA91134/BAA91326." evidence="12" ref="2">
    <original>E</original>
    <variation>Q</variation>
    <location>
        <position position="285"/>
    </location>
</feature>
<feature type="sequence conflict" description="In Ref. 1; AAK58539." evidence="12" ref="1">
    <original>N</original>
    <variation>D</variation>
    <location>
        <position position="289"/>
    </location>
</feature>
<feature type="sequence conflict" description="In Ref. 2; BAB14081." evidence="12" ref="2">
    <original>A</original>
    <variation>V</variation>
    <location>
        <position position="322"/>
    </location>
</feature>
<feature type="sequence conflict" description="In Ref. 2; BAB14081." evidence="12" ref="2">
    <original>K</original>
    <variation>E</variation>
    <location>
        <position position="668"/>
    </location>
</feature>
<feature type="sequence conflict" description="In Ref. 1; AAK58539." evidence="12" ref="1">
    <original>K</original>
    <variation>T</variation>
    <location>
        <position position="693"/>
    </location>
</feature>
<feature type="sequence conflict" description="In Ref. 2; BAB14081." evidence="12" ref="2">
    <original>D</original>
    <variation>E</variation>
    <location>
        <position position="699"/>
    </location>
</feature>
<feature type="helix" evidence="21">
    <location>
        <begin position="908"/>
        <end position="920"/>
    </location>
</feature>
<feature type="turn" evidence="21">
    <location>
        <begin position="923"/>
        <end position="925"/>
    </location>
</feature>
<feature type="strand" evidence="21">
    <location>
        <begin position="926"/>
        <end position="929"/>
    </location>
</feature>
<feature type="strand" evidence="21">
    <location>
        <begin position="932"/>
        <end position="934"/>
    </location>
</feature>
<feature type="turn" evidence="21">
    <location>
        <begin position="935"/>
        <end position="937"/>
    </location>
</feature>
<feature type="strand" evidence="22">
    <location>
        <begin position="939"/>
        <end position="941"/>
    </location>
</feature>
<feature type="helix" evidence="21">
    <location>
        <begin position="943"/>
        <end position="951"/>
    </location>
</feature>
<feature type="turn" evidence="21">
    <location>
        <begin position="958"/>
        <end position="960"/>
    </location>
</feature>
<feature type="strand" evidence="21">
    <location>
        <begin position="968"/>
        <end position="971"/>
    </location>
</feature>
<sequence>MSGIGNKRAAGEPGTSMPPEKKAAVEDSGTTVETIKLGGVSSTEELDIRTLQTKNRKLAEMLDQRQAIEDELREHIEKLERRQATDDASLLIVNRYWSQFDENIRIILKRYDLEQGLGDLLTERKALVVPEPEPDSDSNQERKDDRERGEGQEPAFSFLATLASSSSEEMESQLQERVESSRRAVSQIVTVYDKLQEKVELLSRKLNSGDNLIVEEAVQELNSFLAQENMRLQELTDLLQEKHRTMSQEFSKLQSKVETAESRVSVLESMIDDLQWDIDKIRKREQRLNRHLAEVLERVNSKGYKVYGAGSSLYGGTITINARKFEEMNAELEENKELAQNRLCELEKLRQDFEEVTTQNEKLKVELRSAVEQVVKETPEYRCMQSQFSVLYNESLQLKAHLDEARTLLHGTRGTHQHQVELIERDEVSLHKKLRTEVIQLEDTLAQVRKEYEMLRIEFEQTLAANEQAGPINREMRHLISSLQNHNHQLKGEVLRYKRKLREAQSDLNKTRLRSGSALLQSQSSTEDPKDEPAELKPDSEDLSSQSSASKASQEDANEIKSKRDEEERERERREKEREREREREKEKEREREKQKLKESEKERDSAKDKEKGKHDDGRKKEAEIIKQLKIELKKAQESQKEMKLLLDMYRSAPKEQRDKVQLMAAEKKSKAELEDLRQRLKDLEDKEKKENKKMADEDALRKIRAVEEQIEYLQKKLAMAKQEEEALLSEMDVTGQAFEDMQEQNIRLMQQLREKDDANFKLMSERIKSNQIHKLLKEEKEELADQVLTLKTQVDAQLQVVRKLEEKEHLLQSNIGTGEKELGLRTQALEMNKRKAMEAAQLADDLKAQLELAQKKLHDFQDEIVENSVTKEKDMFNFKRAQEDISRLRRKLETTKKPDNVPKCDEILMEEIKDYKARLTCPCCNMRKKDAVLTKCFHVFCFECVKTRYDTRQRKCPKCNAAFGANDFHRIYIG</sequence>